<organism>
    <name type="scientific">Shewanella baltica (strain OS155 / ATCC BAA-1091)</name>
    <dbReference type="NCBI Taxonomy" id="325240"/>
    <lineage>
        <taxon>Bacteria</taxon>
        <taxon>Pseudomonadati</taxon>
        <taxon>Pseudomonadota</taxon>
        <taxon>Gammaproteobacteria</taxon>
        <taxon>Alteromonadales</taxon>
        <taxon>Shewanellaceae</taxon>
        <taxon>Shewanella</taxon>
    </lineage>
</organism>
<accession>A3D1W5</accession>
<proteinExistence type="inferred from homology"/>
<evidence type="ECO:0000255" key="1">
    <source>
        <dbReference type="HAMAP-Rule" id="MF_00385"/>
    </source>
</evidence>
<evidence type="ECO:0000305" key="2"/>
<reference key="1">
    <citation type="submission" date="2007-02" db="EMBL/GenBank/DDBJ databases">
        <title>Complete sequence of chromosome of Shewanella baltica OS155.</title>
        <authorList>
            <consortium name="US DOE Joint Genome Institute"/>
            <person name="Copeland A."/>
            <person name="Lucas S."/>
            <person name="Lapidus A."/>
            <person name="Barry K."/>
            <person name="Detter J.C."/>
            <person name="Glavina del Rio T."/>
            <person name="Hammon N."/>
            <person name="Israni S."/>
            <person name="Dalin E."/>
            <person name="Tice H."/>
            <person name="Pitluck S."/>
            <person name="Sims D.R."/>
            <person name="Brettin T."/>
            <person name="Bruce D."/>
            <person name="Han C."/>
            <person name="Tapia R."/>
            <person name="Brainard J."/>
            <person name="Schmutz J."/>
            <person name="Larimer F."/>
            <person name="Land M."/>
            <person name="Hauser L."/>
            <person name="Kyrpides N."/>
            <person name="Mikhailova N."/>
            <person name="Brettar I."/>
            <person name="Klappenbach J."/>
            <person name="Konstantinidis K."/>
            <person name="Rodrigues J."/>
            <person name="Tiedje J."/>
            <person name="Richardson P."/>
        </authorList>
    </citation>
    <scope>NUCLEOTIDE SEQUENCE [LARGE SCALE GENOMIC DNA]</scope>
    <source>
        <strain>OS155 / ATCC BAA-1091</strain>
    </source>
</reference>
<sequence length="83" mass="9295">MVTIRLARGGAKKRPFYNIVVADSRNARDGRFIERVGFFNPLARGQEETLRLDLARVEHWVSNGAAATERVAKLIKDARKATA</sequence>
<dbReference type="EMBL" id="CP000563">
    <property type="protein sequence ID" value="ABN60728.1"/>
    <property type="molecule type" value="Genomic_DNA"/>
</dbReference>
<dbReference type="RefSeq" id="WP_006080788.1">
    <property type="nucleotide sequence ID" value="NC_009052.1"/>
</dbReference>
<dbReference type="SMR" id="A3D1W5"/>
<dbReference type="STRING" id="325240.Sbal_1210"/>
<dbReference type="GeneID" id="11771555"/>
<dbReference type="KEGG" id="sbl:Sbal_1210"/>
<dbReference type="HOGENOM" id="CLU_100590_5_1_6"/>
<dbReference type="OrthoDB" id="9807878at2"/>
<dbReference type="Proteomes" id="UP000001557">
    <property type="component" value="Chromosome"/>
</dbReference>
<dbReference type="GO" id="GO:0005737">
    <property type="term" value="C:cytoplasm"/>
    <property type="evidence" value="ECO:0007669"/>
    <property type="project" value="UniProtKB-ARBA"/>
</dbReference>
<dbReference type="GO" id="GO:0015935">
    <property type="term" value="C:small ribosomal subunit"/>
    <property type="evidence" value="ECO:0007669"/>
    <property type="project" value="TreeGrafter"/>
</dbReference>
<dbReference type="GO" id="GO:0003735">
    <property type="term" value="F:structural constituent of ribosome"/>
    <property type="evidence" value="ECO:0007669"/>
    <property type="project" value="InterPro"/>
</dbReference>
<dbReference type="GO" id="GO:0006412">
    <property type="term" value="P:translation"/>
    <property type="evidence" value="ECO:0007669"/>
    <property type="project" value="UniProtKB-UniRule"/>
</dbReference>
<dbReference type="FunFam" id="3.30.1320.10:FF:000001">
    <property type="entry name" value="30S ribosomal protein S16"/>
    <property type="match status" value="1"/>
</dbReference>
<dbReference type="Gene3D" id="3.30.1320.10">
    <property type="match status" value="1"/>
</dbReference>
<dbReference type="HAMAP" id="MF_00385">
    <property type="entry name" value="Ribosomal_bS16"/>
    <property type="match status" value="1"/>
</dbReference>
<dbReference type="InterPro" id="IPR000307">
    <property type="entry name" value="Ribosomal_bS16"/>
</dbReference>
<dbReference type="InterPro" id="IPR020592">
    <property type="entry name" value="Ribosomal_bS16_CS"/>
</dbReference>
<dbReference type="InterPro" id="IPR023803">
    <property type="entry name" value="Ribosomal_bS16_dom_sf"/>
</dbReference>
<dbReference type="NCBIfam" id="TIGR00002">
    <property type="entry name" value="S16"/>
    <property type="match status" value="1"/>
</dbReference>
<dbReference type="PANTHER" id="PTHR12919">
    <property type="entry name" value="30S RIBOSOMAL PROTEIN S16"/>
    <property type="match status" value="1"/>
</dbReference>
<dbReference type="PANTHER" id="PTHR12919:SF20">
    <property type="entry name" value="SMALL RIBOSOMAL SUBUNIT PROTEIN BS16M"/>
    <property type="match status" value="1"/>
</dbReference>
<dbReference type="Pfam" id="PF00886">
    <property type="entry name" value="Ribosomal_S16"/>
    <property type="match status" value="1"/>
</dbReference>
<dbReference type="SUPFAM" id="SSF54565">
    <property type="entry name" value="Ribosomal protein S16"/>
    <property type="match status" value="1"/>
</dbReference>
<dbReference type="PROSITE" id="PS00732">
    <property type="entry name" value="RIBOSOMAL_S16"/>
    <property type="match status" value="1"/>
</dbReference>
<protein>
    <recommendedName>
        <fullName evidence="1">Small ribosomal subunit protein bS16</fullName>
    </recommendedName>
    <alternativeName>
        <fullName evidence="2">30S ribosomal protein S16</fullName>
    </alternativeName>
</protein>
<gene>
    <name evidence="1" type="primary">rpsP</name>
    <name type="ordered locus">Sbal_1210</name>
</gene>
<keyword id="KW-1185">Reference proteome</keyword>
<keyword id="KW-0687">Ribonucleoprotein</keyword>
<keyword id="KW-0689">Ribosomal protein</keyword>
<comment type="similarity">
    <text evidence="1">Belongs to the bacterial ribosomal protein bS16 family.</text>
</comment>
<feature type="chain" id="PRO_1000049343" description="Small ribosomal subunit protein bS16">
    <location>
        <begin position="1"/>
        <end position="83"/>
    </location>
</feature>
<name>RS16_SHEB5</name>